<dbReference type="EMBL" id="CP000970">
    <property type="protein sequence ID" value="ACB18212.1"/>
    <property type="molecule type" value="Genomic_DNA"/>
</dbReference>
<dbReference type="RefSeq" id="WP_000462905.1">
    <property type="nucleotide sequence ID" value="NC_010498.1"/>
</dbReference>
<dbReference type="SMR" id="B1LGM6"/>
<dbReference type="GeneID" id="98390389"/>
<dbReference type="KEGG" id="ecm:EcSMS35_3556"/>
<dbReference type="HOGENOM" id="CLU_158040_3_0_6"/>
<dbReference type="Proteomes" id="UP000007011">
    <property type="component" value="Chromosome"/>
</dbReference>
<dbReference type="GO" id="GO:0003700">
    <property type="term" value="F:DNA-binding transcription factor activity"/>
    <property type="evidence" value="ECO:0007669"/>
    <property type="project" value="UniProtKB-UniRule"/>
</dbReference>
<dbReference type="GO" id="GO:0043565">
    <property type="term" value="F:sequence-specific DNA binding"/>
    <property type="evidence" value="ECO:0007669"/>
    <property type="project" value="InterPro"/>
</dbReference>
<dbReference type="FunFam" id="1.10.10.60:FF:000006">
    <property type="entry name" value="DNA-binding protein Fis"/>
    <property type="match status" value="1"/>
</dbReference>
<dbReference type="Gene3D" id="1.10.10.60">
    <property type="entry name" value="Homeodomain-like"/>
    <property type="match status" value="1"/>
</dbReference>
<dbReference type="HAMAP" id="MF_00166">
    <property type="entry name" value="DNA_binding_Fis"/>
    <property type="match status" value="1"/>
</dbReference>
<dbReference type="InterPro" id="IPR005412">
    <property type="entry name" value="Fis_DNA-bd"/>
</dbReference>
<dbReference type="InterPro" id="IPR009057">
    <property type="entry name" value="Homeodomain-like_sf"/>
</dbReference>
<dbReference type="InterPro" id="IPR002197">
    <property type="entry name" value="HTH_Fis"/>
</dbReference>
<dbReference type="InterPro" id="IPR050207">
    <property type="entry name" value="Trans_regulatory_Fis"/>
</dbReference>
<dbReference type="NCBIfam" id="NF001659">
    <property type="entry name" value="PRK00430.1"/>
    <property type="match status" value="1"/>
</dbReference>
<dbReference type="PANTHER" id="PTHR47918">
    <property type="entry name" value="DNA-BINDING PROTEIN FIS"/>
    <property type="match status" value="1"/>
</dbReference>
<dbReference type="PANTHER" id="PTHR47918:SF1">
    <property type="entry name" value="DNA-BINDING PROTEIN FIS"/>
    <property type="match status" value="1"/>
</dbReference>
<dbReference type="Pfam" id="PF02954">
    <property type="entry name" value="HTH_8"/>
    <property type="match status" value="1"/>
</dbReference>
<dbReference type="PIRSF" id="PIRSF002097">
    <property type="entry name" value="DNA-binding_Fis"/>
    <property type="match status" value="1"/>
</dbReference>
<dbReference type="PRINTS" id="PR01591">
    <property type="entry name" value="DNABINDNGFIS"/>
</dbReference>
<dbReference type="PRINTS" id="PR01590">
    <property type="entry name" value="HTHFIS"/>
</dbReference>
<dbReference type="SUPFAM" id="SSF46689">
    <property type="entry name" value="Homeodomain-like"/>
    <property type="match status" value="1"/>
</dbReference>
<comment type="function">
    <text evidence="1">Activates ribosomal RNA transcription. Plays a direct role in upstream activation of rRNA promoters.</text>
</comment>
<comment type="subunit">
    <text evidence="1">Homodimer.</text>
</comment>
<comment type="similarity">
    <text evidence="1">Belongs to the transcriptional regulatory Fis family.</text>
</comment>
<evidence type="ECO:0000255" key="1">
    <source>
        <dbReference type="HAMAP-Rule" id="MF_00166"/>
    </source>
</evidence>
<reference key="1">
    <citation type="journal article" date="2008" name="J. Bacteriol.">
        <title>Insights into the environmental resistance gene pool from the genome sequence of the multidrug-resistant environmental isolate Escherichia coli SMS-3-5.</title>
        <authorList>
            <person name="Fricke W.F."/>
            <person name="Wright M.S."/>
            <person name="Lindell A.H."/>
            <person name="Harkins D.M."/>
            <person name="Baker-Austin C."/>
            <person name="Ravel J."/>
            <person name="Stepanauskas R."/>
        </authorList>
    </citation>
    <scope>NUCLEOTIDE SEQUENCE [LARGE SCALE GENOMIC DNA]</scope>
    <source>
        <strain>SMS-3-5 / SECEC</strain>
    </source>
</reference>
<sequence length="98" mass="11240">MFEQRVNSDVLTVSTVNSQDQVTQKPLRDSVKQALKNYFAQLNGQDVNDLYELVLAEVEQPLLDMVMQYTRGNQTRAALMMGINRGTLRKKLKKYGMN</sequence>
<proteinExistence type="inferred from homology"/>
<accession>B1LGM6</accession>
<feature type="chain" id="PRO_1000118225" description="DNA-binding protein Fis">
    <location>
        <begin position="1"/>
        <end position="98"/>
    </location>
</feature>
<feature type="DNA-binding region" description="H-T-H motif" evidence="1">
    <location>
        <begin position="74"/>
        <end position="93"/>
    </location>
</feature>
<keyword id="KW-0010">Activator</keyword>
<keyword id="KW-0238">DNA-binding</keyword>
<keyword id="KW-0804">Transcription</keyword>
<keyword id="KW-0805">Transcription regulation</keyword>
<gene>
    <name evidence="1" type="primary">fis</name>
    <name type="ordered locus">EcSMS35_3556</name>
</gene>
<protein>
    <recommendedName>
        <fullName evidence="1">DNA-binding protein Fis</fullName>
    </recommendedName>
</protein>
<organism>
    <name type="scientific">Escherichia coli (strain SMS-3-5 / SECEC)</name>
    <dbReference type="NCBI Taxonomy" id="439855"/>
    <lineage>
        <taxon>Bacteria</taxon>
        <taxon>Pseudomonadati</taxon>
        <taxon>Pseudomonadota</taxon>
        <taxon>Gammaproteobacteria</taxon>
        <taxon>Enterobacterales</taxon>
        <taxon>Enterobacteriaceae</taxon>
        <taxon>Escherichia</taxon>
    </lineage>
</organism>
<name>FIS_ECOSM</name>